<organism>
    <name type="scientific">Pseudomonas putida (strain ATCC 700007 / DSM 6899 / JCM 31910 / BCRC 17059 / LMG 24140 / F1)</name>
    <dbReference type="NCBI Taxonomy" id="351746"/>
    <lineage>
        <taxon>Bacteria</taxon>
        <taxon>Pseudomonadati</taxon>
        <taxon>Pseudomonadota</taxon>
        <taxon>Gammaproteobacteria</taxon>
        <taxon>Pseudomonadales</taxon>
        <taxon>Pseudomonadaceae</taxon>
        <taxon>Pseudomonas</taxon>
    </lineage>
</organism>
<sequence length="229" mass="25497">MSASLAGLERKLGYTFKNQDQMLLALTHRSYAGRNNERLEFLGDAILNFVAGEALFERFPQAREGQLSRLRARLVKGETLARLARGFDLGDYLRLGSGELKSGGFRRESILADALEALIGAIYLDADMDTARERILAWLADEFEGLTLVDTNKDPKTRLQEFLQSRSCELPRYEVVDIQGEPHCRTFFVECEVVLLNNKSRGQGVSRRIAEQVAAASALIALGVENGND</sequence>
<dbReference type="EC" id="3.1.26.3" evidence="1"/>
<dbReference type="EMBL" id="CP000712">
    <property type="protein sequence ID" value="ABQ80412.1"/>
    <property type="molecule type" value="Genomic_DNA"/>
</dbReference>
<dbReference type="SMR" id="A5W8F2"/>
<dbReference type="KEGG" id="ppf:Pput_4288"/>
<dbReference type="eggNOG" id="COG0571">
    <property type="taxonomic scope" value="Bacteria"/>
</dbReference>
<dbReference type="HOGENOM" id="CLU_000907_1_1_6"/>
<dbReference type="GO" id="GO:0005737">
    <property type="term" value="C:cytoplasm"/>
    <property type="evidence" value="ECO:0007669"/>
    <property type="project" value="UniProtKB-SubCell"/>
</dbReference>
<dbReference type="GO" id="GO:0003725">
    <property type="term" value="F:double-stranded RNA binding"/>
    <property type="evidence" value="ECO:0007669"/>
    <property type="project" value="TreeGrafter"/>
</dbReference>
<dbReference type="GO" id="GO:0046872">
    <property type="term" value="F:metal ion binding"/>
    <property type="evidence" value="ECO:0007669"/>
    <property type="project" value="UniProtKB-KW"/>
</dbReference>
<dbReference type="GO" id="GO:0004525">
    <property type="term" value="F:ribonuclease III activity"/>
    <property type="evidence" value="ECO:0007669"/>
    <property type="project" value="UniProtKB-UniRule"/>
</dbReference>
<dbReference type="GO" id="GO:0019843">
    <property type="term" value="F:rRNA binding"/>
    <property type="evidence" value="ECO:0007669"/>
    <property type="project" value="UniProtKB-KW"/>
</dbReference>
<dbReference type="GO" id="GO:0006397">
    <property type="term" value="P:mRNA processing"/>
    <property type="evidence" value="ECO:0007669"/>
    <property type="project" value="UniProtKB-UniRule"/>
</dbReference>
<dbReference type="GO" id="GO:0010468">
    <property type="term" value="P:regulation of gene expression"/>
    <property type="evidence" value="ECO:0007669"/>
    <property type="project" value="TreeGrafter"/>
</dbReference>
<dbReference type="GO" id="GO:0006364">
    <property type="term" value="P:rRNA processing"/>
    <property type="evidence" value="ECO:0007669"/>
    <property type="project" value="UniProtKB-UniRule"/>
</dbReference>
<dbReference type="GO" id="GO:0008033">
    <property type="term" value="P:tRNA processing"/>
    <property type="evidence" value="ECO:0007669"/>
    <property type="project" value="UniProtKB-KW"/>
</dbReference>
<dbReference type="CDD" id="cd10845">
    <property type="entry name" value="DSRM_RNAse_III_family"/>
    <property type="match status" value="1"/>
</dbReference>
<dbReference type="CDD" id="cd00593">
    <property type="entry name" value="RIBOc"/>
    <property type="match status" value="1"/>
</dbReference>
<dbReference type="FunFam" id="1.10.1520.10:FF:000001">
    <property type="entry name" value="Ribonuclease 3"/>
    <property type="match status" value="1"/>
</dbReference>
<dbReference type="FunFam" id="3.30.160.20:FF:000003">
    <property type="entry name" value="Ribonuclease 3"/>
    <property type="match status" value="1"/>
</dbReference>
<dbReference type="Gene3D" id="3.30.160.20">
    <property type="match status" value="1"/>
</dbReference>
<dbReference type="Gene3D" id="1.10.1520.10">
    <property type="entry name" value="Ribonuclease III domain"/>
    <property type="match status" value="1"/>
</dbReference>
<dbReference type="HAMAP" id="MF_00104">
    <property type="entry name" value="RNase_III"/>
    <property type="match status" value="1"/>
</dbReference>
<dbReference type="InterPro" id="IPR014720">
    <property type="entry name" value="dsRBD_dom"/>
</dbReference>
<dbReference type="InterPro" id="IPR011907">
    <property type="entry name" value="RNase_III"/>
</dbReference>
<dbReference type="InterPro" id="IPR000999">
    <property type="entry name" value="RNase_III_dom"/>
</dbReference>
<dbReference type="InterPro" id="IPR036389">
    <property type="entry name" value="RNase_III_sf"/>
</dbReference>
<dbReference type="NCBIfam" id="TIGR02191">
    <property type="entry name" value="RNaseIII"/>
    <property type="match status" value="1"/>
</dbReference>
<dbReference type="PANTHER" id="PTHR11207:SF0">
    <property type="entry name" value="RIBONUCLEASE 3"/>
    <property type="match status" value="1"/>
</dbReference>
<dbReference type="PANTHER" id="PTHR11207">
    <property type="entry name" value="RIBONUCLEASE III"/>
    <property type="match status" value="1"/>
</dbReference>
<dbReference type="Pfam" id="PF00035">
    <property type="entry name" value="dsrm"/>
    <property type="match status" value="1"/>
</dbReference>
<dbReference type="Pfam" id="PF14622">
    <property type="entry name" value="Ribonucleas_3_3"/>
    <property type="match status" value="1"/>
</dbReference>
<dbReference type="SMART" id="SM00358">
    <property type="entry name" value="DSRM"/>
    <property type="match status" value="1"/>
</dbReference>
<dbReference type="SMART" id="SM00535">
    <property type="entry name" value="RIBOc"/>
    <property type="match status" value="1"/>
</dbReference>
<dbReference type="SUPFAM" id="SSF54768">
    <property type="entry name" value="dsRNA-binding domain-like"/>
    <property type="match status" value="1"/>
</dbReference>
<dbReference type="SUPFAM" id="SSF69065">
    <property type="entry name" value="RNase III domain-like"/>
    <property type="match status" value="1"/>
</dbReference>
<dbReference type="PROSITE" id="PS50137">
    <property type="entry name" value="DS_RBD"/>
    <property type="match status" value="1"/>
</dbReference>
<dbReference type="PROSITE" id="PS00517">
    <property type="entry name" value="RNASE_3_1"/>
    <property type="match status" value="1"/>
</dbReference>
<dbReference type="PROSITE" id="PS50142">
    <property type="entry name" value="RNASE_3_2"/>
    <property type="match status" value="1"/>
</dbReference>
<feature type="chain" id="PRO_1000075790" description="Ribonuclease 3">
    <location>
        <begin position="1"/>
        <end position="229"/>
    </location>
</feature>
<feature type="domain" description="RNase III" evidence="1">
    <location>
        <begin position="5"/>
        <end position="127"/>
    </location>
</feature>
<feature type="domain" description="DRBM" evidence="1">
    <location>
        <begin position="154"/>
        <end position="224"/>
    </location>
</feature>
<feature type="active site" evidence="1">
    <location>
        <position position="44"/>
    </location>
</feature>
<feature type="active site" evidence="1">
    <location>
        <position position="116"/>
    </location>
</feature>
<feature type="binding site" evidence="1">
    <location>
        <position position="40"/>
    </location>
    <ligand>
        <name>Mg(2+)</name>
        <dbReference type="ChEBI" id="CHEBI:18420"/>
    </ligand>
</feature>
<feature type="binding site" evidence="1">
    <location>
        <position position="113"/>
    </location>
    <ligand>
        <name>Mg(2+)</name>
        <dbReference type="ChEBI" id="CHEBI:18420"/>
    </ligand>
</feature>
<feature type="binding site" evidence="1">
    <location>
        <position position="116"/>
    </location>
    <ligand>
        <name>Mg(2+)</name>
        <dbReference type="ChEBI" id="CHEBI:18420"/>
    </ligand>
</feature>
<proteinExistence type="inferred from homology"/>
<accession>A5W8F2</accession>
<name>RNC_PSEP1</name>
<evidence type="ECO:0000255" key="1">
    <source>
        <dbReference type="HAMAP-Rule" id="MF_00104"/>
    </source>
</evidence>
<reference key="1">
    <citation type="submission" date="2007-05" db="EMBL/GenBank/DDBJ databases">
        <title>Complete sequence of Pseudomonas putida F1.</title>
        <authorList>
            <consortium name="US DOE Joint Genome Institute"/>
            <person name="Copeland A."/>
            <person name="Lucas S."/>
            <person name="Lapidus A."/>
            <person name="Barry K."/>
            <person name="Detter J.C."/>
            <person name="Glavina del Rio T."/>
            <person name="Hammon N."/>
            <person name="Israni S."/>
            <person name="Dalin E."/>
            <person name="Tice H."/>
            <person name="Pitluck S."/>
            <person name="Chain P."/>
            <person name="Malfatti S."/>
            <person name="Shin M."/>
            <person name="Vergez L."/>
            <person name="Schmutz J."/>
            <person name="Larimer F."/>
            <person name="Land M."/>
            <person name="Hauser L."/>
            <person name="Kyrpides N."/>
            <person name="Lykidis A."/>
            <person name="Parales R."/>
            <person name="Richardson P."/>
        </authorList>
    </citation>
    <scope>NUCLEOTIDE SEQUENCE [LARGE SCALE GENOMIC DNA]</scope>
    <source>
        <strain>ATCC 700007 / DSM 6899 / JCM 31910 / BCRC 17059 / LMG 24140 / F1</strain>
    </source>
</reference>
<comment type="function">
    <text evidence="1">Digests double-stranded RNA. Involved in the processing of primary rRNA transcript to yield the immediate precursors to the large and small rRNAs (23S and 16S). Processes some mRNAs, and tRNAs when they are encoded in the rRNA operon. Processes pre-crRNA and tracrRNA of type II CRISPR loci if present in the organism.</text>
</comment>
<comment type="catalytic activity">
    <reaction evidence="1">
        <text>Endonucleolytic cleavage to 5'-phosphomonoester.</text>
        <dbReference type="EC" id="3.1.26.3"/>
    </reaction>
</comment>
<comment type="cofactor">
    <cofactor evidence="1">
        <name>Mg(2+)</name>
        <dbReference type="ChEBI" id="CHEBI:18420"/>
    </cofactor>
</comment>
<comment type="subunit">
    <text evidence="1">Homodimer.</text>
</comment>
<comment type="subcellular location">
    <subcellularLocation>
        <location evidence="1">Cytoplasm</location>
    </subcellularLocation>
</comment>
<comment type="similarity">
    <text evidence="1">Belongs to the ribonuclease III family.</text>
</comment>
<keyword id="KW-0963">Cytoplasm</keyword>
<keyword id="KW-0255">Endonuclease</keyword>
<keyword id="KW-0378">Hydrolase</keyword>
<keyword id="KW-0460">Magnesium</keyword>
<keyword id="KW-0479">Metal-binding</keyword>
<keyword id="KW-0507">mRNA processing</keyword>
<keyword id="KW-0540">Nuclease</keyword>
<keyword id="KW-0694">RNA-binding</keyword>
<keyword id="KW-0698">rRNA processing</keyword>
<keyword id="KW-0699">rRNA-binding</keyword>
<keyword id="KW-0819">tRNA processing</keyword>
<protein>
    <recommendedName>
        <fullName evidence="1">Ribonuclease 3</fullName>
        <ecNumber evidence="1">3.1.26.3</ecNumber>
    </recommendedName>
    <alternativeName>
        <fullName evidence="1">Ribonuclease III</fullName>
        <shortName evidence="1">RNase III</shortName>
    </alternativeName>
</protein>
<gene>
    <name evidence="1" type="primary">rnc</name>
    <name type="ordered locus">Pput_4288</name>
</gene>